<feature type="chain" id="PRO_0000296851" description="DNA-directed RNA polymerase subunit alpha">
    <location>
        <begin position="1"/>
        <end position="312"/>
    </location>
</feature>
<feature type="region of interest" description="Alpha N-terminal domain (alpha-NTD)" evidence="1">
    <location>
        <begin position="1"/>
        <end position="229"/>
    </location>
</feature>
<feature type="region of interest" description="Alpha C-terminal domain (alpha-CTD)" evidence="1">
    <location>
        <begin position="240"/>
        <end position="312"/>
    </location>
</feature>
<comment type="function">
    <text evidence="1">DNA-dependent RNA polymerase catalyzes the transcription of DNA into RNA using the four ribonucleoside triphosphates as substrates.</text>
</comment>
<comment type="catalytic activity">
    <reaction evidence="1">
        <text>RNA(n) + a ribonucleoside 5'-triphosphate = RNA(n+1) + diphosphate</text>
        <dbReference type="Rhea" id="RHEA:21248"/>
        <dbReference type="Rhea" id="RHEA-COMP:14527"/>
        <dbReference type="Rhea" id="RHEA-COMP:17342"/>
        <dbReference type="ChEBI" id="CHEBI:33019"/>
        <dbReference type="ChEBI" id="CHEBI:61557"/>
        <dbReference type="ChEBI" id="CHEBI:140395"/>
        <dbReference type="EC" id="2.7.7.6"/>
    </reaction>
</comment>
<comment type="subunit">
    <text evidence="1">In cyanobacteria the RNAP catalytic core is composed of 2 alpha, 1 beta, 1 beta', 1 gamma and 1 omega subunit. When a sigma factor is associated with the core the holoenzyme is formed, which can initiate transcription.</text>
</comment>
<comment type="domain">
    <text evidence="1">The N-terminal domain is essential for RNAP assembly and basal transcription, whereas the C-terminal domain is involved in interaction with transcriptional regulators and with upstream promoter elements.</text>
</comment>
<comment type="similarity">
    <text evidence="1">Belongs to the RNA polymerase alpha chain family.</text>
</comment>
<organism>
    <name type="scientific">Prochlorococcus marinus (strain MIT 9301)</name>
    <dbReference type="NCBI Taxonomy" id="167546"/>
    <lineage>
        <taxon>Bacteria</taxon>
        <taxon>Bacillati</taxon>
        <taxon>Cyanobacteriota</taxon>
        <taxon>Cyanophyceae</taxon>
        <taxon>Synechococcales</taxon>
        <taxon>Prochlorococcaceae</taxon>
        <taxon>Prochlorococcus</taxon>
    </lineage>
</organism>
<protein>
    <recommendedName>
        <fullName evidence="1">DNA-directed RNA polymerase subunit alpha</fullName>
        <shortName evidence="1">RNAP subunit alpha</shortName>
        <ecNumber evidence="1">2.7.7.6</ecNumber>
    </recommendedName>
    <alternativeName>
        <fullName evidence="1">RNA polymerase subunit alpha</fullName>
    </alternativeName>
    <alternativeName>
        <fullName evidence="1">Transcriptase subunit alpha</fullName>
    </alternativeName>
</protein>
<accession>A3PF25</accession>
<dbReference type="EC" id="2.7.7.6" evidence="1"/>
<dbReference type="EMBL" id="CP000576">
    <property type="protein sequence ID" value="ABO18350.1"/>
    <property type="molecule type" value="Genomic_DNA"/>
</dbReference>
<dbReference type="RefSeq" id="WP_011863643.1">
    <property type="nucleotide sequence ID" value="NC_009091.1"/>
</dbReference>
<dbReference type="SMR" id="A3PF25"/>
<dbReference type="STRING" id="167546.P9301_17271"/>
<dbReference type="KEGG" id="pmg:P9301_17271"/>
<dbReference type="eggNOG" id="COG0202">
    <property type="taxonomic scope" value="Bacteria"/>
</dbReference>
<dbReference type="HOGENOM" id="CLU_053084_0_1_3"/>
<dbReference type="OrthoDB" id="9805706at2"/>
<dbReference type="Proteomes" id="UP000001430">
    <property type="component" value="Chromosome"/>
</dbReference>
<dbReference type="GO" id="GO:0005737">
    <property type="term" value="C:cytoplasm"/>
    <property type="evidence" value="ECO:0007669"/>
    <property type="project" value="UniProtKB-ARBA"/>
</dbReference>
<dbReference type="GO" id="GO:0000428">
    <property type="term" value="C:DNA-directed RNA polymerase complex"/>
    <property type="evidence" value="ECO:0007669"/>
    <property type="project" value="UniProtKB-KW"/>
</dbReference>
<dbReference type="GO" id="GO:0003677">
    <property type="term" value="F:DNA binding"/>
    <property type="evidence" value="ECO:0007669"/>
    <property type="project" value="UniProtKB-UniRule"/>
</dbReference>
<dbReference type="GO" id="GO:0003899">
    <property type="term" value="F:DNA-directed RNA polymerase activity"/>
    <property type="evidence" value="ECO:0007669"/>
    <property type="project" value="UniProtKB-UniRule"/>
</dbReference>
<dbReference type="GO" id="GO:0046983">
    <property type="term" value="F:protein dimerization activity"/>
    <property type="evidence" value="ECO:0007669"/>
    <property type="project" value="InterPro"/>
</dbReference>
<dbReference type="GO" id="GO:0006351">
    <property type="term" value="P:DNA-templated transcription"/>
    <property type="evidence" value="ECO:0007669"/>
    <property type="project" value="UniProtKB-UniRule"/>
</dbReference>
<dbReference type="CDD" id="cd06928">
    <property type="entry name" value="RNAP_alpha_NTD"/>
    <property type="match status" value="1"/>
</dbReference>
<dbReference type="FunFam" id="2.170.120.12:FF:000001">
    <property type="entry name" value="DNA-directed RNA polymerase subunit alpha"/>
    <property type="match status" value="1"/>
</dbReference>
<dbReference type="Gene3D" id="1.10.150.20">
    <property type="entry name" value="5' to 3' exonuclease, C-terminal subdomain"/>
    <property type="match status" value="1"/>
</dbReference>
<dbReference type="Gene3D" id="2.170.120.12">
    <property type="entry name" value="DNA-directed RNA polymerase, insert domain"/>
    <property type="match status" value="1"/>
</dbReference>
<dbReference type="Gene3D" id="3.30.1360.10">
    <property type="entry name" value="RNA polymerase, RBP11-like subunit"/>
    <property type="match status" value="1"/>
</dbReference>
<dbReference type="HAMAP" id="MF_00059">
    <property type="entry name" value="RNApol_bact_RpoA"/>
    <property type="match status" value="1"/>
</dbReference>
<dbReference type="InterPro" id="IPR011262">
    <property type="entry name" value="DNA-dir_RNA_pol_insert"/>
</dbReference>
<dbReference type="InterPro" id="IPR011263">
    <property type="entry name" value="DNA-dir_RNA_pol_RpoA/D/Rpb3"/>
</dbReference>
<dbReference type="InterPro" id="IPR011773">
    <property type="entry name" value="DNA-dir_RpoA"/>
</dbReference>
<dbReference type="InterPro" id="IPR036603">
    <property type="entry name" value="RBP11-like"/>
</dbReference>
<dbReference type="InterPro" id="IPR011260">
    <property type="entry name" value="RNAP_asu_C"/>
</dbReference>
<dbReference type="InterPro" id="IPR036643">
    <property type="entry name" value="RNApol_insert_sf"/>
</dbReference>
<dbReference type="NCBIfam" id="NF003516">
    <property type="entry name" value="PRK05182.2-2"/>
    <property type="match status" value="1"/>
</dbReference>
<dbReference type="NCBIfam" id="NF003519">
    <property type="entry name" value="PRK05182.2-5"/>
    <property type="match status" value="1"/>
</dbReference>
<dbReference type="NCBIfam" id="TIGR02027">
    <property type="entry name" value="rpoA"/>
    <property type="match status" value="1"/>
</dbReference>
<dbReference type="Pfam" id="PF01000">
    <property type="entry name" value="RNA_pol_A_bac"/>
    <property type="match status" value="1"/>
</dbReference>
<dbReference type="Pfam" id="PF03118">
    <property type="entry name" value="RNA_pol_A_CTD"/>
    <property type="match status" value="1"/>
</dbReference>
<dbReference type="Pfam" id="PF01193">
    <property type="entry name" value="RNA_pol_L"/>
    <property type="match status" value="1"/>
</dbReference>
<dbReference type="SMART" id="SM00662">
    <property type="entry name" value="RPOLD"/>
    <property type="match status" value="1"/>
</dbReference>
<dbReference type="SUPFAM" id="SSF47789">
    <property type="entry name" value="C-terminal domain of RNA polymerase alpha subunit"/>
    <property type="match status" value="1"/>
</dbReference>
<dbReference type="SUPFAM" id="SSF56553">
    <property type="entry name" value="Insert subdomain of RNA polymerase alpha subunit"/>
    <property type="match status" value="1"/>
</dbReference>
<dbReference type="SUPFAM" id="SSF55257">
    <property type="entry name" value="RBP11-like subunits of RNA polymerase"/>
    <property type="match status" value="1"/>
</dbReference>
<sequence length="312" mass="34194">MLQYQIERIDHQIADDRSQTGTFLIGPLERGQATTLGNSLRRVLMGGLEGSAVTAVRIAGINHEYATIPGVREDVLDILLNCKQLSINSTNPELEIGRLVASGPMEVKANDIQFSSQVEIVDGEKPIATIQEGHNLELEIHVERGVGYRPVDRKSEETTAIDLLQIDAVFMPVKRVNFTIDETAVAEGGTGRERLKMEVVTDGSTSPDDAIAEAANQLIELFQPLATVTMVEEIPEEPEPSPEAQIPLEELNLSVRAYNCLKRAQVNSVSDLMGFSYEDLLEIKNFGSKSADEVIEALERIGISIPQSRTSV</sequence>
<keyword id="KW-0240">DNA-directed RNA polymerase</keyword>
<keyword id="KW-0548">Nucleotidyltransferase</keyword>
<keyword id="KW-1185">Reference proteome</keyword>
<keyword id="KW-0804">Transcription</keyword>
<keyword id="KW-0808">Transferase</keyword>
<proteinExistence type="inferred from homology"/>
<reference key="1">
    <citation type="journal article" date="2007" name="PLoS Genet.">
        <title>Patterns and implications of gene gain and loss in the evolution of Prochlorococcus.</title>
        <authorList>
            <person name="Kettler G.C."/>
            <person name="Martiny A.C."/>
            <person name="Huang K."/>
            <person name="Zucker J."/>
            <person name="Coleman M.L."/>
            <person name="Rodrigue S."/>
            <person name="Chen F."/>
            <person name="Lapidus A."/>
            <person name="Ferriera S."/>
            <person name="Johnson J."/>
            <person name="Steglich C."/>
            <person name="Church G.M."/>
            <person name="Richardson P."/>
            <person name="Chisholm S.W."/>
        </authorList>
    </citation>
    <scope>NUCLEOTIDE SEQUENCE [LARGE SCALE GENOMIC DNA]</scope>
    <source>
        <strain>MIT 9301</strain>
    </source>
</reference>
<name>RPOA_PROM0</name>
<gene>
    <name evidence="1" type="primary">rpoA</name>
    <name type="ordered locus">P9301_17271</name>
</gene>
<evidence type="ECO:0000255" key="1">
    <source>
        <dbReference type="HAMAP-Rule" id="MF_00059"/>
    </source>
</evidence>